<accession>A4W5F2</accession>
<protein>
    <recommendedName>
        <fullName evidence="1">Chorismate pyruvate-lyase</fullName>
        <shortName evidence="1">CL</shortName>
        <shortName evidence="1">CPL</shortName>
        <ecNumber evidence="1">4.1.3.40</ecNumber>
    </recommendedName>
</protein>
<evidence type="ECO:0000255" key="1">
    <source>
        <dbReference type="HAMAP-Rule" id="MF_01632"/>
    </source>
</evidence>
<comment type="function">
    <text evidence="1">Removes the pyruvyl group from chorismate, with concomitant aromatization of the ring, to provide 4-hydroxybenzoate (4HB) for the ubiquinone pathway.</text>
</comment>
<comment type="catalytic activity">
    <reaction evidence="1">
        <text>chorismate = 4-hydroxybenzoate + pyruvate</text>
        <dbReference type="Rhea" id="RHEA:16505"/>
        <dbReference type="ChEBI" id="CHEBI:15361"/>
        <dbReference type="ChEBI" id="CHEBI:17879"/>
        <dbReference type="ChEBI" id="CHEBI:29748"/>
        <dbReference type="EC" id="4.1.3.40"/>
    </reaction>
</comment>
<comment type="pathway">
    <text evidence="1">Cofactor biosynthesis; ubiquinone biosynthesis.</text>
</comment>
<comment type="subunit">
    <text evidence="1">Monomer.</text>
</comment>
<comment type="subcellular location">
    <subcellularLocation>
        <location evidence="1">Cytoplasm</location>
    </subcellularLocation>
</comment>
<comment type="similarity">
    <text evidence="1">Belongs to the UbiC family.</text>
</comment>
<sequence length="165" mass="18777">MSHPALTQLRALRYFDQIPALSPEQLDWLLLEDSMTKRFEQQGKNVTVTLIQEGFVSSDEVSSELPLLPKEERYWLREILLCADGEPWLAGRTVVPESTLSGPELALQTLGKTPLGRYLFTSSELTRDFIEIGRDADLWGRRSRLRLSGKPLMLTELFLPASPLY</sequence>
<dbReference type="EC" id="4.1.3.40" evidence="1"/>
<dbReference type="EMBL" id="CP000653">
    <property type="protein sequence ID" value="ABP58932.1"/>
    <property type="molecule type" value="Genomic_DNA"/>
</dbReference>
<dbReference type="RefSeq" id="WP_011915505.1">
    <property type="nucleotide sequence ID" value="NC_009436.1"/>
</dbReference>
<dbReference type="SMR" id="A4W5F2"/>
<dbReference type="STRING" id="399742.Ent638_0243"/>
<dbReference type="KEGG" id="ent:Ent638_0243"/>
<dbReference type="eggNOG" id="COG3161">
    <property type="taxonomic scope" value="Bacteria"/>
</dbReference>
<dbReference type="HOGENOM" id="CLU_096824_1_0_6"/>
<dbReference type="OrthoDB" id="9789493at2"/>
<dbReference type="UniPathway" id="UPA00232"/>
<dbReference type="Proteomes" id="UP000000230">
    <property type="component" value="Chromosome"/>
</dbReference>
<dbReference type="GO" id="GO:0005829">
    <property type="term" value="C:cytosol"/>
    <property type="evidence" value="ECO:0007669"/>
    <property type="project" value="TreeGrafter"/>
</dbReference>
<dbReference type="GO" id="GO:0008813">
    <property type="term" value="F:chorismate lyase activity"/>
    <property type="evidence" value="ECO:0007669"/>
    <property type="project" value="UniProtKB-UniRule"/>
</dbReference>
<dbReference type="GO" id="GO:0042866">
    <property type="term" value="P:pyruvate biosynthetic process"/>
    <property type="evidence" value="ECO:0007669"/>
    <property type="project" value="UniProtKB-UniRule"/>
</dbReference>
<dbReference type="GO" id="GO:0006744">
    <property type="term" value="P:ubiquinone biosynthetic process"/>
    <property type="evidence" value="ECO:0007669"/>
    <property type="project" value="UniProtKB-UniRule"/>
</dbReference>
<dbReference type="FunFam" id="3.40.1410.10:FF:000002">
    <property type="entry name" value="Chorismate pyruvate-lyase"/>
    <property type="match status" value="1"/>
</dbReference>
<dbReference type="Gene3D" id="3.40.1410.10">
    <property type="entry name" value="Chorismate lyase-like"/>
    <property type="match status" value="1"/>
</dbReference>
<dbReference type="HAMAP" id="MF_01632">
    <property type="entry name" value="UbiC"/>
    <property type="match status" value="1"/>
</dbReference>
<dbReference type="InterPro" id="IPR007440">
    <property type="entry name" value="Chorismate--pyruvate_lyase"/>
</dbReference>
<dbReference type="InterPro" id="IPR028978">
    <property type="entry name" value="Chorismate_lyase_/UTRA_dom_sf"/>
</dbReference>
<dbReference type="NCBIfam" id="NF008656">
    <property type="entry name" value="PRK11655.1"/>
    <property type="match status" value="1"/>
</dbReference>
<dbReference type="PANTHER" id="PTHR38683">
    <property type="entry name" value="CHORISMATE PYRUVATE-LYASE"/>
    <property type="match status" value="1"/>
</dbReference>
<dbReference type="PANTHER" id="PTHR38683:SF1">
    <property type="entry name" value="CHORISMATE PYRUVATE-LYASE"/>
    <property type="match status" value="1"/>
</dbReference>
<dbReference type="Pfam" id="PF04345">
    <property type="entry name" value="Chor_lyase"/>
    <property type="match status" value="1"/>
</dbReference>
<dbReference type="SUPFAM" id="SSF64288">
    <property type="entry name" value="Chorismate lyase-like"/>
    <property type="match status" value="1"/>
</dbReference>
<organism>
    <name type="scientific">Enterobacter sp. (strain 638)</name>
    <dbReference type="NCBI Taxonomy" id="399742"/>
    <lineage>
        <taxon>Bacteria</taxon>
        <taxon>Pseudomonadati</taxon>
        <taxon>Pseudomonadota</taxon>
        <taxon>Gammaproteobacteria</taxon>
        <taxon>Enterobacterales</taxon>
        <taxon>Enterobacteriaceae</taxon>
        <taxon>Enterobacter</taxon>
    </lineage>
</organism>
<feature type="chain" id="PRO_1000069744" description="Chorismate pyruvate-lyase">
    <location>
        <begin position="1"/>
        <end position="165"/>
    </location>
</feature>
<feature type="binding site" evidence="1">
    <location>
        <position position="35"/>
    </location>
    <ligand>
        <name>substrate</name>
    </ligand>
</feature>
<feature type="binding site" evidence="1">
    <location>
        <position position="77"/>
    </location>
    <ligand>
        <name>substrate</name>
    </ligand>
</feature>
<feature type="binding site" evidence="1">
    <location>
        <position position="115"/>
    </location>
    <ligand>
        <name>substrate</name>
    </ligand>
</feature>
<feature type="binding site" evidence="1">
    <location>
        <position position="156"/>
    </location>
    <ligand>
        <name>substrate</name>
    </ligand>
</feature>
<keyword id="KW-0963">Cytoplasm</keyword>
<keyword id="KW-0456">Lyase</keyword>
<keyword id="KW-0670">Pyruvate</keyword>
<keyword id="KW-0831">Ubiquinone biosynthesis</keyword>
<proteinExistence type="inferred from homology"/>
<name>UBIC_ENT38</name>
<reference key="1">
    <citation type="journal article" date="2010" name="PLoS Genet.">
        <title>Genome sequence of the plant growth promoting endophytic bacterium Enterobacter sp. 638.</title>
        <authorList>
            <person name="Taghavi S."/>
            <person name="van der Lelie D."/>
            <person name="Hoffman A."/>
            <person name="Zhang Y.B."/>
            <person name="Walla M.D."/>
            <person name="Vangronsveld J."/>
            <person name="Newman L."/>
            <person name="Monchy S."/>
        </authorList>
    </citation>
    <scope>NUCLEOTIDE SEQUENCE [LARGE SCALE GENOMIC DNA]</scope>
    <source>
        <strain>638</strain>
    </source>
</reference>
<gene>
    <name evidence="1" type="primary">ubiC</name>
    <name type="ordered locus">Ent638_0243</name>
</gene>